<comment type="function">
    <text evidence="2">Essential for male fertility. Plays an important role in spermatogenesis and regulates sperm motility by controlling the development of the flagellar bending of sperm (PubMed:24339785).</text>
</comment>
<comment type="subcellular location">
    <subcellularLocation>
        <location evidence="2">Cytoplasm</location>
        <location evidence="2">Cytosol</location>
    </subcellularLocation>
</comment>
<comment type="alternative products">
    <event type="alternative splicing"/>
    <isoform>
        <id>Q9D5U8-1</id>
        <name>1</name>
        <sequence type="displayed"/>
    </isoform>
    <isoform>
        <id>Q9D5U8-2</id>
        <name>2</name>
        <sequence type="described" ref="VSP_003825"/>
    </isoform>
</comment>
<comment type="tissue specificity">
    <text evidence="2">Testis-specific. Exclusively expressed in testicular germ cells while it is not present in mature sperm (at protein level).</text>
</comment>
<comment type="disruption phenotype">
    <text evidence="2">Males are either infertile due to a lack of sperm resulting from spermatogenic arrest, or subfertile due to impaired sperm motility. The motility defect is caused by altered Ca(2+) regulation of the flagellar beat of sperm.</text>
</comment>
<comment type="sequence caution" evidence="5">
    <conflict type="erroneous initiation">
        <sequence resource="EMBL-CDS" id="AAH27204"/>
    </conflict>
    <text>Truncated N-terminus.</text>
</comment>
<protein>
    <recommendedName>
        <fullName>Cyclic nucleotide-binding domain-containing protein 2</fullName>
    </recommendedName>
    <alternativeName>
        <fullName evidence="4">Cyclic nucleotide receptor involved in sperm function</fullName>
    </alternativeName>
</protein>
<keyword id="KW-0025">Alternative splicing</keyword>
<keyword id="KW-0114">cAMP</keyword>
<keyword id="KW-0116">cAMP-binding</keyword>
<keyword id="KW-0963">Cytoplasm</keyword>
<keyword id="KW-0547">Nucleotide-binding</keyword>
<keyword id="KW-1185">Reference proteome</keyword>
<dbReference type="EMBL" id="AK014912">
    <property type="status" value="NOT_ANNOTATED_CDS"/>
    <property type="molecule type" value="mRNA"/>
</dbReference>
<dbReference type="EMBL" id="AL928935">
    <property type="status" value="NOT_ANNOTATED_CDS"/>
    <property type="molecule type" value="Genomic_DNA"/>
</dbReference>
<dbReference type="EMBL" id="AL929404">
    <property type="status" value="NOT_ANNOTATED_CDS"/>
    <property type="molecule type" value="Genomic_DNA"/>
</dbReference>
<dbReference type="EMBL" id="BC027204">
    <property type="protein sequence ID" value="AAH27204.1"/>
    <property type="status" value="ALT_INIT"/>
    <property type="molecule type" value="mRNA"/>
</dbReference>
<dbReference type="CCDS" id="CCDS50778.1">
    <molecule id="Q9D5U8-1"/>
</dbReference>
<dbReference type="RefSeq" id="NP_081861.2">
    <molecule id="Q9D5U8-1"/>
    <property type="nucleotide sequence ID" value="NM_027585.2"/>
</dbReference>
<dbReference type="SMR" id="Q9D5U8"/>
<dbReference type="BioGRID" id="214308">
    <property type="interactions" value="1"/>
</dbReference>
<dbReference type="FunCoup" id="Q9D5U8">
    <property type="interactions" value="298"/>
</dbReference>
<dbReference type="STRING" id="10090.ENSMUSP00000041268"/>
<dbReference type="iPTMnet" id="Q9D5U8"/>
<dbReference type="PhosphoSitePlus" id="Q9D5U8"/>
<dbReference type="jPOST" id="Q9D5U8"/>
<dbReference type="PaxDb" id="10090-ENSMUSP00000041268"/>
<dbReference type="ProteomicsDB" id="283448">
    <molecule id="Q9D5U8-1"/>
</dbReference>
<dbReference type="ProteomicsDB" id="283449">
    <molecule id="Q9D5U8-2"/>
</dbReference>
<dbReference type="Antibodypedia" id="51163">
    <property type="antibodies" value="50 antibodies from 13 providers"/>
</dbReference>
<dbReference type="Ensembl" id="ENSMUST00000037096.9">
    <molecule id="Q9D5U8-1"/>
    <property type="protein sequence ID" value="ENSMUSP00000041268.3"/>
    <property type="gene ID" value="ENSMUSG00000038085.14"/>
</dbReference>
<dbReference type="GeneID" id="70873"/>
<dbReference type="KEGG" id="mmu:70873"/>
<dbReference type="UCSC" id="uc008nnd.2">
    <molecule id="Q9D5U8-1"/>
    <property type="organism name" value="mouse"/>
</dbReference>
<dbReference type="UCSC" id="uc008nne.2">
    <molecule id="Q9D5U8-2"/>
    <property type="organism name" value="mouse"/>
</dbReference>
<dbReference type="AGR" id="MGI:1918123"/>
<dbReference type="CTD" id="140894"/>
<dbReference type="MGI" id="MGI:1918123">
    <property type="gene designation" value="Cnbd2"/>
</dbReference>
<dbReference type="VEuPathDB" id="HostDB:ENSMUSG00000038085"/>
<dbReference type="eggNOG" id="KOG1113">
    <property type="taxonomic scope" value="Eukaryota"/>
</dbReference>
<dbReference type="GeneTree" id="ENSGT00390000003964"/>
<dbReference type="InParanoid" id="Q9D5U8"/>
<dbReference type="OMA" id="KTTKPCY"/>
<dbReference type="OrthoDB" id="166212at2759"/>
<dbReference type="PhylomeDB" id="Q9D5U8"/>
<dbReference type="TreeFam" id="TF326269"/>
<dbReference type="BioGRID-ORCS" id="70873">
    <property type="hits" value="3 hits in 76 CRISPR screens"/>
</dbReference>
<dbReference type="ChiTaRS" id="Cnbd2">
    <property type="organism name" value="mouse"/>
</dbReference>
<dbReference type="PRO" id="PR:Q9D5U8"/>
<dbReference type="Proteomes" id="UP000000589">
    <property type="component" value="Chromosome 2"/>
</dbReference>
<dbReference type="RNAct" id="Q9D5U8">
    <property type="molecule type" value="protein"/>
</dbReference>
<dbReference type="Bgee" id="ENSMUSG00000038085">
    <property type="expression patterns" value="Expressed in spermatid and 89 other cell types or tissues"/>
</dbReference>
<dbReference type="ExpressionAtlas" id="Q9D5U8">
    <property type="expression patterns" value="baseline and differential"/>
</dbReference>
<dbReference type="GO" id="GO:0005829">
    <property type="term" value="C:cytosol"/>
    <property type="evidence" value="ECO:0000314"/>
    <property type="project" value="MGI"/>
</dbReference>
<dbReference type="GO" id="GO:0030552">
    <property type="term" value="F:cAMP binding"/>
    <property type="evidence" value="ECO:0000314"/>
    <property type="project" value="MGI"/>
</dbReference>
<dbReference type="GO" id="GO:0007283">
    <property type="term" value="P:spermatogenesis"/>
    <property type="evidence" value="ECO:0000315"/>
    <property type="project" value="MGI"/>
</dbReference>
<dbReference type="CDD" id="cd00038">
    <property type="entry name" value="CAP_ED"/>
    <property type="match status" value="1"/>
</dbReference>
<dbReference type="FunFam" id="2.60.120.10:FF:000083">
    <property type="entry name" value="Cyclic nucleotide binding domain containing 2"/>
    <property type="match status" value="1"/>
</dbReference>
<dbReference type="Gene3D" id="2.60.120.10">
    <property type="entry name" value="Jelly Rolls"/>
    <property type="match status" value="1"/>
</dbReference>
<dbReference type="InterPro" id="IPR018488">
    <property type="entry name" value="cNMP-bd_CS"/>
</dbReference>
<dbReference type="InterPro" id="IPR000595">
    <property type="entry name" value="cNMP-bd_dom"/>
</dbReference>
<dbReference type="InterPro" id="IPR018490">
    <property type="entry name" value="cNMP-bd_dom_sf"/>
</dbReference>
<dbReference type="InterPro" id="IPR014710">
    <property type="entry name" value="RmlC-like_jellyroll"/>
</dbReference>
<dbReference type="PANTHER" id="PTHR23011">
    <property type="entry name" value="CYCLIC NUCLEOTIDE-BINDING DOMAIN CONTAINING PROTEIN"/>
    <property type="match status" value="1"/>
</dbReference>
<dbReference type="PANTHER" id="PTHR23011:SF43">
    <property type="entry name" value="CYCLIC NUCLEOTIDE-BINDING DOMAIN-CONTAINING PROTEIN 2"/>
    <property type="match status" value="1"/>
</dbReference>
<dbReference type="Pfam" id="PF00027">
    <property type="entry name" value="cNMP_binding"/>
    <property type="match status" value="1"/>
</dbReference>
<dbReference type="SMART" id="SM00100">
    <property type="entry name" value="cNMP"/>
    <property type="match status" value="1"/>
</dbReference>
<dbReference type="SUPFAM" id="SSF51206">
    <property type="entry name" value="cAMP-binding domain-like"/>
    <property type="match status" value="2"/>
</dbReference>
<dbReference type="PROSITE" id="PS00888">
    <property type="entry name" value="CNMP_BINDING_1"/>
    <property type="match status" value="1"/>
</dbReference>
<dbReference type="PROSITE" id="PS00889">
    <property type="entry name" value="CNMP_BINDING_2"/>
    <property type="match status" value="1"/>
</dbReference>
<dbReference type="PROSITE" id="PS50042">
    <property type="entry name" value="CNMP_BINDING_3"/>
    <property type="match status" value="1"/>
</dbReference>
<evidence type="ECO:0000256" key="1">
    <source>
        <dbReference type="SAM" id="MobiDB-lite"/>
    </source>
</evidence>
<evidence type="ECO:0000269" key="2">
    <source>
    </source>
</evidence>
<evidence type="ECO:0000303" key="3">
    <source>
    </source>
</evidence>
<evidence type="ECO:0000303" key="4">
    <source>
    </source>
</evidence>
<evidence type="ECO:0000305" key="5"/>
<reference key="1">
    <citation type="journal article" date="2005" name="Science">
        <title>The transcriptional landscape of the mammalian genome.</title>
        <authorList>
            <person name="Carninci P."/>
            <person name="Kasukawa T."/>
            <person name="Katayama S."/>
            <person name="Gough J."/>
            <person name="Frith M.C."/>
            <person name="Maeda N."/>
            <person name="Oyama R."/>
            <person name="Ravasi T."/>
            <person name="Lenhard B."/>
            <person name="Wells C."/>
            <person name="Kodzius R."/>
            <person name="Shimokawa K."/>
            <person name="Bajic V.B."/>
            <person name="Brenner S.E."/>
            <person name="Batalov S."/>
            <person name="Forrest A.R."/>
            <person name="Zavolan M."/>
            <person name="Davis M.J."/>
            <person name="Wilming L.G."/>
            <person name="Aidinis V."/>
            <person name="Allen J.E."/>
            <person name="Ambesi-Impiombato A."/>
            <person name="Apweiler R."/>
            <person name="Aturaliya R.N."/>
            <person name="Bailey T.L."/>
            <person name="Bansal M."/>
            <person name="Baxter L."/>
            <person name="Beisel K.W."/>
            <person name="Bersano T."/>
            <person name="Bono H."/>
            <person name="Chalk A.M."/>
            <person name="Chiu K.P."/>
            <person name="Choudhary V."/>
            <person name="Christoffels A."/>
            <person name="Clutterbuck D.R."/>
            <person name="Crowe M.L."/>
            <person name="Dalla E."/>
            <person name="Dalrymple B.P."/>
            <person name="de Bono B."/>
            <person name="Della Gatta G."/>
            <person name="di Bernardo D."/>
            <person name="Down T."/>
            <person name="Engstrom P."/>
            <person name="Fagiolini M."/>
            <person name="Faulkner G."/>
            <person name="Fletcher C.F."/>
            <person name="Fukushima T."/>
            <person name="Furuno M."/>
            <person name="Futaki S."/>
            <person name="Gariboldi M."/>
            <person name="Georgii-Hemming P."/>
            <person name="Gingeras T.R."/>
            <person name="Gojobori T."/>
            <person name="Green R.E."/>
            <person name="Gustincich S."/>
            <person name="Harbers M."/>
            <person name="Hayashi Y."/>
            <person name="Hensch T.K."/>
            <person name="Hirokawa N."/>
            <person name="Hill D."/>
            <person name="Huminiecki L."/>
            <person name="Iacono M."/>
            <person name="Ikeo K."/>
            <person name="Iwama A."/>
            <person name="Ishikawa T."/>
            <person name="Jakt M."/>
            <person name="Kanapin A."/>
            <person name="Katoh M."/>
            <person name="Kawasawa Y."/>
            <person name="Kelso J."/>
            <person name="Kitamura H."/>
            <person name="Kitano H."/>
            <person name="Kollias G."/>
            <person name="Krishnan S.P."/>
            <person name="Kruger A."/>
            <person name="Kummerfeld S.K."/>
            <person name="Kurochkin I.V."/>
            <person name="Lareau L.F."/>
            <person name="Lazarevic D."/>
            <person name="Lipovich L."/>
            <person name="Liu J."/>
            <person name="Liuni S."/>
            <person name="McWilliam S."/>
            <person name="Madan Babu M."/>
            <person name="Madera M."/>
            <person name="Marchionni L."/>
            <person name="Matsuda H."/>
            <person name="Matsuzawa S."/>
            <person name="Miki H."/>
            <person name="Mignone F."/>
            <person name="Miyake S."/>
            <person name="Morris K."/>
            <person name="Mottagui-Tabar S."/>
            <person name="Mulder N."/>
            <person name="Nakano N."/>
            <person name="Nakauchi H."/>
            <person name="Ng P."/>
            <person name="Nilsson R."/>
            <person name="Nishiguchi S."/>
            <person name="Nishikawa S."/>
            <person name="Nori F."/>
            <person name="Ohara O."/>
            <person name="Okazaki Y."/>
            <person name="Orlando V."/>
            <person name="Pang K.C."/>
            <person name="Pavan W.J."/>
            <person name="Pavesi G."/>
            <person name="Pesole G."/>
            <person name="Petrovsky N."/>
            <person name="Piazza S."/>
            <person name="Reed J."/>
            <person name="Reid J.F."/>
            <person name="Ring B.Z."/>
            <person name="Ringwald M."/>
            <person name="Rost B."/>
            <person name="Ruan Y."/>
            <person name="Salzberg S.L."/>
            <person name="Sandelin A."/>
            <person name="Schneider C."/>
            <person name="Schoenbach C."/>
            <person name="Sekiguchi K."/>
            <person name="Semple C.A."/>
            <person name="Seno S."/>
            <person name="Sessa L."/>
            <person name="Sheng Y."/>
            <person name="Shibata Y."/>
            <person name="Shimada H."/>
            <person name="Shimada K."/>
            <person name="Silva D."/>
            <person name="Sinclair B."/>
            <person name="Sperling S."/>
            <person name="Stupka E."/>
            <person name="Sugiura K."/>
            <person name="Sultana R."/>
            <person name="Takenaka Y."/>
            <person name="Taki K."/>
            <person name="Tammoja K."/>
            <person name="Tan S.L."/>
            <person name="Tang S."/>
            <person name="Taylor M.S."/>
            <person name="Tegner J."/>
            <person name="Teichmann S.A."/>
            <person name="Ueda H.R."/>
            <person name="van Nimwegen E."/>
            <person name="Verardo R."/>
            <person name="Wei C.L."/>
            <person name="Yagi K."/>
            <person name="Yamanishi H."/>
            <person name="Zabarovsky E."/>
            <person name="Zhu S."/>
            <person name="Zimmer A."/>
            <person name="Hide W."/>
            <person name="Bult C."/>
            <person name="Grimmond S.M."/>
            <person name="Teasdale R.D."/>
            <person name="Liu E.T."/>
            <person name="Brusic V."/>
            <person name="Quackenbush J."/>
            <person name="Wahlestedt C."/>
            <person name="Mattick J.S."/>
            <person name="Hume D.A."/>
            <person name="Kai C."/>
            <person name="Sasaki D."/>
            <person name="Tomaru Y."/>
            <person name="Fukuda S."/>
            <person name="Kanamori-Katayama M."/>
            <person name="Suzuki M."/>
            <person name="Aoki J."/>
            <person name="Arakawa T."/>
            <person name="Iida J."/>
            <person name="Imamura K."/>
            <person name="Itoh M."/>
            <person name="Kato T."/>
            <person name="Kawaji H."/>
            <person name="Kawagashira N."/>
            <person name="Kawashima T."/>
            <person name="Kojima M."/>
            <person name="Kondo S."/>
            <person name="Konno H."/>
            <person name="Nakano K."/>
            <person name="Ninomiya N."/>
            <person name="Nishio T."/>
            <person name="Okada M."/>
            <person name="Plessy C."/>
            <person name="Shibata K."/>
            <person name="Shiraki T."/>
            <person name="Suzuki S."/>
            <person name="Tagami M."/>
            <person name="Waki K."/>
            <person name="Watahiki A."/>
            <person name="Okamura-Oho Y."/>
            <person name="Suzuki H."/>
            <person name="Kawai J."/>
            <person name="Hayashizaki Y."/>
        </authorList>
    </citation>
    <scope>NUCLEOTIDE SEQUENCE [LARGE SCALE MRNA] (ISOFORM 1)</scope>
    <source>
        <strain>C57BL/6J</strain>
        <tissue>Testis</tissue>
    </source>
</reference>
<reference key="2">
    <citation type="journal article" date="2009" name="PLoS Biol.">
        <title>Lineage-specific biology revealed by a finished genome assembly of the mouse.</title>
        <authorList>
            <person name="Church D.M."/>
            <person name="Goodstadt L."/>
            <person name="Hillier L.W."/>
            <person name="Zody M.C."/>
            <person name="Goldstein S."/>
            <person name="She X."/>
            <person name="Bult C.J."/>
            <person name="Agarwala R."/>
            <person name="Cherry J.L."/>
            <person name="DiCuccio M."/>
            <person name="Hlavina W."/>
            <person name="Kapustin Y."/>
            <person name="Meric P."/>
            <person name="Maglott D."/>
            <person name="Birtle Z."/>
            <person name="Marques A.C."/>
            <person name="Graves T."/>
            <person name="Zhou S."/>
            <person name="Teague B."/>
            <person name="Potamousis K."/>
            <person name="Churas C."/>
            <person name="Place M."/>
            <person name="Herschleb J."/>
            <person name="Runnheim R."/>
            <person name="Forrest D."/>
            <person name="Amos-Landgraf J."/>
            <person name="Schwartz D.C."/>
            <person name="Cheng Z."/>
            <person name="Lindblad-Toh K."/>
            <person name="Eichler E.E."/>
            <person name="Ponting C.P."/>
        </authorList>
    </citation>
    <scope>NUCLEOTIDE SEQUENCE [LARGE SCALE GENOMIC DNA]</scope>
    <source>
        <strain>C57BL/6J</strain>
    </source>
</reference>
<reference key="3">
    <citation type="journal article" date="2004" name="Genome Res.">
        <title>The status, quality, and expansion of the NIH full-length cDNA project: the Mammalian Gene Collection (MGC).</title>
        <authorList>
            <consortium name="The MGC Project Team"/>
        </authorList>
    </citation>
    <scope>NUCLEOTIDE SEQUENCE [LARGE SCALE MRNA] OF 35-673 (ISOFORM 2)</scope>
</reference>
<reference key="4">
    <citation type="journal article" date="2013" name="PLoS Genet.">
        <title>CRIS-a novel cAMP-binding protein controlling spermiogenesis and the development of flagellar bending.</title>
        <authorList>
            <person name="Kraehling A.M."/>
            <person name="Alvarez L."/>
            <person name="Debowski K."/>
            <person name="Van Q."/>
            <person name="Gunkel M."/>
            <person name="Irsen S."/>
            <person name="Al-Amoudi A."/>
            <person name="Struenker T."/>
            <person name="Kremmer E."/>
            <person name="Krause E."/>
            <person name="Voigt I."/>
            <person name="Woertge S."/>
            <person name="Waisman A."/>
            <person name="Weyand I."/>
            <person name="Seifert R."/>
            <person name="Kaupp U.B."/>
            <person name="Wachten D."/>
        </authorList>
    </citation>
    <scope>FUNCTION</scope>
    <scope>SUBCELLULAR LOCATION</scope>
    <scope>TISSUE SPECIFICITY</scope>
    <scope>DISRUPTION PHENOTYPE</scope>
</reference>
<proteinExistence type="evidence at protein level"/>
<name>CNBD2_MOUSE</name>
<accession>Q9D5U8</accession>
<accession>A2ATV2</accession>
<accession>Q8R083</accession>
<sequence length="673" mass="77892">MNRSANPEAASSTSHVKFDLGKSVDISSTDTKDGGTARSPLEPADKSDTTESKSESGSDSRSEEDKESPASIKEIKAETPQPKDRPGVQIKLSWSQKIKSWTAKKKRKLYQLVIDIIMMNRVCKMFRQGLRGFREYQIIEPVHKKHPDFSFWDKKKQGRISFVTEDFAAQEGHFPPRAISITQKKPSWRTHQEIQDLCNILQALDCYRSYTESLQLLLAKVIRFERFGRRRVIVKKGQMGNSFYFIYLGTVAITEDEDGSSAFLDPHPTLLHRGGSFGEMGLLSTTVRSATVVCMEETEFLVVDREDFVANKLGDEVQKETQYRYNFFRNLDIFQSWSEEKLWKLVALGRIERFSYGQMVSKDFMNSAFITFICQGNCEILRLVALGDCSAYYKWVWQQLELLDHKPLRIHDNEISPKERFKELQIKSYPLQDFTYLKLLRLQKAREQQGIDFHGKINKVENTLPKLLGPKIKSRFGHLVKCSMVNTKFGELPKEAIVGVYMKIHKTEEGEIVGLHQAFVPEIQRDCRPFILLSLGSELIQVRKEKFYDMVDEETRAKIIKMDVDYPSDEDLCQSFLKENDYIVFRKDLLRLLVEPLNKSPFIPVQTKKKEIYNHKSLFLDLCSLEKKVKQHYPIFLAPQKYLPPLRVVQAISAPRHKIQELLPQYKNAGVLI</sequence>
<gene>
    <name type="primary">Cnbd2</name>
    <name evidence="4" type="synonym">Cris</name>
</gene>
<feature type="chain" id="PRO_0000079473" description="Cyclic nucleotide-binding domain-containing protein 2">
    <location>
        <begin position="1"/>
        <end position="673"/>
    </location>
</feature>
<feature type="region of interest" description="Disordered" evidence="1">
    <location>
        <begin position="1"/>
        <end position="89"/>
    </location>
</feature>
<feature type="compositionally biased region" description="Polar residues" evidence="1">
    <location>
        <begin position="1"/>
        <end position="15"/>
    </location>
</feature>
<feature type="compositionally biased region" description="Basic and acidic residues" evidence="1">
    <location>
        <begin position="43"/>
        <end position="86"/>
    </location>
</feature>
<feature type="binding site">
    <location>
        <begin position="206"/>
        <end position="329"/>
    </location>
    <ligand>
        <name>a nucleoside 3',5'-cyclic phosphate</name>
        <dbReference type="ChEBI" id="CHEBI:58464"/>
    </ligand>
</feature>
<feature type="splice variant" id="VSP_003825" description="In isoform 2." evidence="3">
    <location>
        <begin position="172"/>
        <end position="183"/>
    </location>
</feature>
<feature type="sequence conflict" description="In Ref. 3; AAH27204." evidence="5" ref="3">
    <original>F</original>
    <variation>Y</variation>
    <location>
        <position position="476"/>
    </location>
</feature>
<feature type="sequence conflict" description="In Ref. 3; AAH27204." evidence="5" ref="3">
    <original>L</original>
    <variation>P</variation>
    <location>
        <position position="479"/>
    </location>
</feature>
<feature type="sequence conflict" description="In Ref. 3; AAH27204." evidence="5" ref="3">
    <original>R</original>
    <variation>Q</variation>
    <location>
        <position position="591"/>
    </location>
</feature>
<feature type="sequence conflict" description="In Ref. 1; AK014912." evidence="5" ref="1">
    <original>H</original>
    <variation>Q</variation>
    <location>
        <position position="657"/>
    </location>
</feature>
<organism>
    <name type="scientific">Mus musculus</name>
    <name type="common">Mouse</name>
    <dbReference type="NCBI Taxonomy" id="10090"/>
    <lineage>
        <taxon>Eukaryota</taxon>
        <taxon>Metazoa</taxon>
        <taxon>Chordata</taxon>
        <taxon>Craniata</taxon>
        <taxon>Vertebrata</taxon>
        <taxon>Euteleostomi</taxon>
        <taxon>Mammalia</taxon>
        <taxon>Eutheria</taxon>
        <taxon>Euarchontoglires</taxon>
        <taxon>Glires</taxon>
        <taxon>Rodentia</taxon>
        <taxon>Myomorpha</taxon>
        <taxon>Muroidea</taxon>
        <taxon>Muridae</taxon>
        <taxon>Murinae</taxon>
        <taxon>Mus</taxon>
        <taxon>Mus</taxon>
    </lineage>
</organism>